<comment type="function">
    <text evidence="1">Involved in the synthesis of meso-diaminopimelate (m-DAP or DL-DAP), required for both lysine and peptidoglycan biosynthesis. Catalyzes the direct conversion of tetrahydrodipicolinate to LL-diaminopimelate.</text>
</comment>
<comment type="catalytic activity">
    <reaction evidence="1">
        <text>(2S,6S)-2,6-diaminopimelate + 2-oxoglutarate = (S)-2,3,4,5-tetrahydrodipicolinate + L-glutamate + H2O + H(+)</text>
        <dbReference type="Rhea" id="RHEA:23988"/>
        <dbReference type="ChEBI" id="CHEBI:15377"/>
        <dbReference type="ChEBI" id="CHEBI:15378"/>
        <dbReference type="ChEBI" id="CHEBI:16810"/>
        <dbReference type="ChEBI" id="CHEBI:16845"/>
        <dbReference type="ChEBI" id="CHEBI:29985"/>
        <dbReference type="ChEBI" id="CHEBI:57609"/>
        <dbReference type="EC" id="2.6.1.83"/>
    </reaction>
</comment>
<comment type="cofactor">
    <cofactor evidence="1">
        <name>pyridoxal 5'-phosphate</name>
        <dbReference type="ChEBI" id="CHEBI:597326"/>
    </cofactor>
</comment>
<comment type="pathway">
    <text evidence="1">Amino-acid biosynthesis; L-lysine biosynthesis via DAP pathway; LL-2,6-diaminopimelate from (S)-tetrahydrodipicolinate (aminotransferase route): step 1/1.</text>
</comment>
<comment type="subunit">
    <text evidence="1">Homodimer.</text>
</comment>
<comment type="similarity">
    <text evidence="1">Belongs to the class-I pyridoxal-phosphate-dependent aminotransferase family. LL-diaminopimelate aminotransferase subfamily.</text>
</comment>
<dbReference type="EC" id="2.6.1.83" evidence="1"/>
<dbReference type="EMBL" id="CP000576">
    <property type="protein sequence ID" value="ABO18314.1"/>
    <property type="molecule type" value="Genomic_DNA"/>
</dbReference>
<dbReference type="RefSeq" id="WP_011863611.1">
    <property type="nucleotide sequence ID" value="NC_009091.1"/>
</dbReference>
<dbReference type="SMR" id="A3PEY9"/>
<dbReference type="STRING" id="167546.P9301_16911"/>
<dbReference type="KEGG" id="pmg:P9301_16911"/>
<dbReference type="eggNOG" id="COG0436">
    <property type="taxonomic scope" value="Bacteria"/>
</dbReference>
<dbReference type="HOGENOM" id="CLU_051433_0_0_3"/>
<dbReference type="OrthoDB" id="9802328at2"/>
<dbReference type="UniPathway" id="UPA00034">
    <property type="reaction ID" value="UER00466"/>
</dbReference>
<dbReference type="Proteomes" id="UP000001430">
    <property type="component" value="Chromosome"/>
</dbReference>
<dbReference type="GO" id="GO:0010285">
    <property type="term" value="F:L,L-diaminopimelate aminotransferase activity"/>
    <property type="evidence" value="ECO:0007669"/>
    <property type="project" value="UniProtKB-UniRule"/>
</dbReference>
<dbReference type="GO" id="GO:0030170">
    <property type="term" value="F:pyridoxal phosphate binding"/>
    <property type="evidence" value="ECO:0007669"/>
    <property type="project" value="UniProtKB-UniRule"/>
</dbReference>
<dbReference type="GO" id="GO:0033362">
    <property type="term" value="P:lysine biosynthetic process via diaminopimelate, diaminopimelate-aminotransferase pathway"/>
    <property type="evidence" value="ECO:0007669"/>
    <property type="project" value="UniProtKB-UniRule"/>
</dbReference>
<dbReference type="CDD" id="cd00609">
    <property type="entry name" value="AAT_like"/>
    <property type="match status" value="1"/>
</dbReference>
<dbReference type="FunFam" id="3.40.640.10:FF:000099">
    <property type="entry name" value="LL-diaminopimelate aminotransferase, chloroplastic"/>
    <property type="match status" value="1"/>
</dbReference>
<dbReference type="Gene3D" id="3.90.1150.10">
    <property type="entry name" value="Aspartate Aminotransferase, domain 1"/>
    <property type="match status" value="1"/>
</dbReference>
<dbReference type="Gene3D" id="3.40.640.10">
    <property type="entry name" value="Type I PLP-dependent aspartate aminotransferase-like (Major domain)"/>
    <property type="match status" value="1"/>
</dbReference>
<dbReference type="HAMAP" id="MF_01642">
    <property type="entry name" value="DapL_aminotrans_1"/>
    <property type="match status" value="1"/>
</dbReference>
<dbReference type="InterPro" id="IPR004839">
    <property type="entry name" value="Aminotransferase_I/II_large"/>
</dbReference>
<dbReference type="InterPro" id="IPR019942">
    <property type="entry name" value="DapL/ALD1"/>
</dbReference>
<dbReference type="InterPro" id="IPR015424">
    <property type="entry name" value="PyrdxlP-dep_Trfase"/>
</dbReference>
<dbReference type="InterPro" id="IPR015421">
    <property type="entry name" value="PyrdxlP-dep_Trfase_major"/>
</dbReference>
<dbReference type="InterPro" id="IPR015422">
    <property type="entry name" value="PyrdxlP-dep_Trfase_small"/>
</dbReference>
<dbReference type="NCBIfam" id="TIGR03542">
    <property type="entry name" value="DAPAT_plant"/>
    <property type="match status" value="1"/>
</dbReference>
<dbReference type="PANTHER" id="PTHR43144">
    <property type="entry name" value="AMINOTRANSFERASE"/>
    <property type="match status" value="1"/>
</dbReference>
<dbReference type="Pfam" id="PF00155">
    <property type="entry name" value="Aminotran_1_2"/>
    <property type="match status" value="1"/>
</dbReference>
<dbReference type="SUPFAM" id="SSF53383">
    <property type="entry name" value="PLP-dependent transferases"/>
    <property type="match status" value="1"/>
</dbReference>
<feature type="chain" id="PRO_0000312535" description="LL-diaminopimelate aminotransferase">
    <location>
        <begin position="1"/>
        <end position="408"/>
    </location>
</feature>
<feature type="binding site" evidence="1">
    <location>
        <position position="15"/>
    </location>
    <ligand>
        <name>substrate</name>
    </ligand>
</feature>
<feature type="binding site" evidence="1">
    <location>
        <position position="42"/>
    </location>
    <ligand>
        <name>substrate</name>
    </ligand>
</feature>
<feature type="binding site" evidence="1">
    <location>
        <position position="72"/>
    </location>
    <ligand>
        <name>pyridoxal 5'-phosphate</name>
        <dbReference type="ChEBI" id="CHEBI:597326"/>
    </ligand>
</feature>
<feature type="binding site" evidence="1">
    <location>
        <begin position="108"/>
        <end position="109"/>
    </location>
    <ligand>
        <name>pyridoxal 5'-phosphate</name>
        <dbReference type="ChEBI" id="CHEBI:597326"/>
    </ligand>
</feature>
<feature type="binding site" evidence="1">
    <location>
        <position position="109"/>
    </location>
    <ligand>
        <name>substrate</name>
    </ligand>
</feature>
<feature type="binding site" evidence="1">
    <location>
        <position position="132"/>
    </location>
    <ligand>
        <name>pyridoxal 5'-phosphate</name>
        <dbReference type="ChEBI" id="CHEBI:597326"/>
    </ligand>
</feature>
<feature type="binding site" evidence="1">
    <location>
        <position position="132"/>
    </location>
    <ligand>
        <name>substrate</name>
    </ligand>
</feature>
<feature type="binding site" evidence="1">
    <location>
        <position position="187"/>
    </location>
    <ligand>
        <name>pyridoxal 5'-phosphate</name>
        <dbReference type="ChEBI" id="CHEBI:597326"/>
    </ligand>
</feature>
<feature type="binding site" evidence="1">
    <location>
        <position position="187"/>
    </location>
    <ligand>
        <name>substrate</name>
    </ligand>
</feature>
<feature type="binding site" evidence="1">
    <location>
        <position position="218"/>
    </location>
    <ligand>
        <name>pyridoxal 5'-phosphate</name>
        <dbReference type="ChEBI" id="CHEBI:597326"/>
    </ligand>
</feature>
<feature type="binding site" evidence="1">
    <location>
        <begin position="246"/>
        <end position="248"/>
    </location>
    <ligand>
        <name>pyridoxal 5'-phosphate</name>
        <dbReference type="ChEBI" id="CHEBI:597326"/>
    </ligand>
</feature>
<feature type="binding site" evidence="1">
    <location>
        <position position="257"/>
    </location>
    <ligand>
        <name>pyridoxal 5'-phosphate</name>
        <dbReference type="ChEBI" id="CHEBI:597326"/>
    </ligand>
</feature>
<feature type="binding site" evidence="1">
    <location>
        <position position="292"/>
    </location>
    <ligand>
        <name>pyridoxal 5'-phosphate</name>
        <dbReference type="ChEBI" id="CHEBI:597326"/>
    </ligand>
</feature>
<feature type="binding site" evidence="1">
    <location>
        <position position="292"/>
    </location>
    <ligand>
        <name>substrate</name>
    </ligand>
</feature>
<feature type="binding site" evidence="1">
    <location>
        <position position="388"/>
    </location>
    <ligand>
        <name>substrate</name>
    </ligand>
</feature>
<feature type="modified residue" description="N6-(pyridoxal phosphate)lysine" evidence="1">
    <location>
        <position position="249"/>
    </location>
</feature>
<reference key="1">
    <citation type="journal article" date="2007" name="PLoS Genet.">
        <title>Patterns and implications of gene gain and loss in the evolution of Prochlorococcus.</title>
        <authorList>
            <person name="Kettler G.C."/>
            <person name="Martiny A.C."/>
            <person name="Huang K."/>
            <person name="Zucker J."/>
            <person name="Coleman M.L."/>
            <person name="Rodrigue S."/>
            <person name="Chen F."/>
            <person name="Lapidus A."/>
            <person name="Ferriera S."/>
            <person name="Johnson J."/>
            <person name="Steglich C."/>
            <person name="Church G.M."/>
            <person name="Richardson P."/>
            <person name="Chisholm S.W."/>
        </authorList>
    </citation>
    <scope>NUCLEOTIDE SEQUENCE [LARGE SCALE GENOMIC DNA]</scope>
    <source>
        <strain>MIT 9301</strain>
    </source>
</reference>
<name>DAPAT_PROM0</name>
<sequence>MVQVNENYLKLKAGYLFPEIAKRVKAYSQSNKSADIIKLGIGDVTEPLPRACIEAMGKALDEMGTTDGFKGYGPEQGYSWLREKISEHDFISRGCQISSEEIFVSDGSKCDSSNILDILGKDNSIAVTDPVYPVYVDSNVMTGRTGDSLENGTYKGLTYLAINEDNNFLPELPEKKVDILYLCFPNNPTGATINKADLKKWVDYALQNKSLILFDAAYEAFIQDDNIPHSIYEIEGAKDCAIEFRSFSKNAGFTGVRCAFTVIPKNLKGLSSTNEEIDLWPLWNRRQSTKFNGVSYVVQRGAEAVYSLEGKKQVKGLIDFYMENAKIMKNKLQNAGYKVYGGDNAPYIWIKVPDQMSSWDFFDFLLQKVGVVGTPGSGFGLAGEGYFRLSAFNSRSNVLDAMERIINI</sequence>
<organism>
    <name type="scientific">Prochlorococcus marinus (strain MIT 9301)</name>
    <dbReference type="NCBI Taxonomy" id="167546"/>
    <lineage>
        <taxon>Bacteria</taxon>
        <taxon>Bacillati</taxon>
        <taxon>Cyanobacteriota</taxon>
        <taxon>Cyanophyceae</taxon>
        <taxon>Synechococcales</taxon>
        <taxon>Prochlorococcaceae</taxon>
        <taxon>Prochlorococcus</taxon>
    </lineage>
</organism>
<proteinExistence type="inferred from homology"/>
<gene>
    <name evidence="1" type="primary">dapL</name>
    <name type="ordered locus">P9301_16911</name>
</gene>
<accession>A3PEY9</accession>
<evidence type="ECO:0000255" key="1">
    <source>
        <dbReference type="HAMAP-Rule" id="MF_01642"/>
    </source>
</evidence>
<keyword id="KW-0032">Aminotransferase</keyword>
<keyword id="KW-0663">Pyridoxal phosphate</keyword>
<keyword id="KW-1185">Reference proteome</keyword>
<keyword id="KW-0808">Transferase</keyword>
<protein>
    <recommendedName>
        <fullName evidence="1">LL-diaminopimelate aminotransferase</fullName>
        <shortName evidence="1">DAP-AT</shortName>
        <shortName evidence="1">DAP-aminotransferase</shortName>
        <shortName evidence="1">LL-DAP-aminotransferase</shortName>
        <ecNumber evidence="1">2.6.1.83</ecNumber>
    </recommendedName>
</protein>